<reference key="1">
    <citation type="journal article" date="1993" name="Mol. Biol. Evol.">
        <title>Sequence relationship of retrotransposable elements R1 and R2 within and between divergent insect species.</title>
        <authorList>
            <person name="Burke W.D."/>
            <person name="Eickbush D.G."/>
            <person name="Xiong Y."/>
            <person name="Jakubczak J.L."/>
            <person name="Eickbush T.H."/>
        </authorList>
    </citation>
    <scope>NUCLEOTIDE SEQUENCE [GENOMIC DNA]</scope>
</reference>
<reference key="2">
    <citation type="journal article" date="1991" name="Proc. Natl. Acad. Sci. U.S.A.">
        <title>Retrotransposable elements R1 and R2 interrupt the rRNA genes of most insects.</title>
        <authorList>
            <person name="Jakubczak J.L."/>
            <person name="Burke W.D."/>
            <person name="Eickbush T.H."/>
        </authorList>
    </citation>
    <scope>NUCLEOTIDE SEQUENCE [GENOMIC DNA] OF 422-439</scope>
</reference>
<accession>Q05118</accession>
<sequence>GTLANIIMLEHYIKLRRLKGKTYNVVSLDIRKAFDTVSHPAILRAMRAFGIDDGMQDFIMSTITDAYTNIVVGGRTTNKIYIRNGVKQGDPLSPVLFNIVLDELVTRLNDEQPGASMTPACKIASLAFADDLLLLEDRDIDVPNSLATTCAYFRTRGMTLNPEKCASISAATVSGRSVPRSKPSFTIDGRYIKPLGGINTFKYLGLTFSSTGVAKPTVYNLTRWLRNLEKAPLKPNQKFYILKTHLLPRLFYGLQSPGVTAGILQECDRLARRTTRKIFHLNVHTGSQFLHARIRDGGLGLVQMRYRIPCILSKRLGSLKQGNDTTNWSDIFNIEGPARSFYFRIRFLSSKGDPDPYWREEIRTRPLSSGLQDAADDASSRSWLNTIPRGWTGRDFVRAVQLRTGNLATQGLPYMAPEHRGCRNGCPRTESLSHVLQGCPLTHHERIKRHNELVAKVAKHARKKGWTTEVEPYVYHQDGQLYKPDLAIHQPDNTLVICDVQVCWEGPRPLATSWDNKRLVYDNPRFREAAVRRWGDKSLVFSPLLLGARGIWPRANVPTCNILSIPTTLRASCVHTCLKWGSTIHRHFMAGVWRRRPPDPPRPVPP</sequence>
<protein>
    <recommendedName>
        <fullName>Retrovirus-related Pol polyprotein from type-1 retrotransposable element R2</fullName>
    </recommendedName>
    <alternativeName>
        <fullName>Retrovirus-related Pol polyprotein from type I retrotransposable element R2</fullName>
    </alternativeName>
    <domain>
        <recommendedName>
            <fullName>Reverse transcriptase</fullName>
            <ecNumber>2.7.7.49</ecNumber>
        </recommendedName>
    </domain>
    <domain>
        <recommendedName>
            <fullName>Endonuclease</fullName>
        </recommendedName>
    </domain>
</protein>
<feature type="chain" id="PRO_0000058501" description="Retrovirus-related Pol polyprotein from type-1 retrotransposable element R2">
    <location>
        <begin position="1" status="less than"/>
        <end position="606"/>
    </location>
</feature>
<feature type="domain" description="Reverse transcriptase" evidence="1">
    <location>
        <begin position="1" status="less than"/>
        <end position="208"/>
    </location>
</feature>
<feature type="region of interest" description="Nucleic acid-binding endonuclease">
    <location>
        <begin position="331"/>
        <end position="606"/>
    </location>
</feature>
<feature type="non-terminal residue">
    <location>
        <position position="1"/>
    </location>
</feature>
<organism>
    <name type="scientific">Popillia japonica</name>
    <name type="common">Japanese beetle</name>
    <dbReference type="NCBI Taxonomy" id="7064"/>
    <lineage>
        <taxon>Eukaryota</taxon>
        <taxon>Metazoa</taxon>
        <taxon>Ecdysozoa</taxon>
        <taxon>Arthropoda</taxon>
        <taxon>Hexapoda</taxon>
        <taxon>Insecta</taxon>
        <taxon>Pterygota</taxon>
        <taxon>Neoptera</taxon>
        <taxon>Endopterygota</taxon>
        <taxon>Coleoptera</taxon>
        <taxon>Polyphaga</taxon>
        <taxon>Scarabaeiformia</taxon>
        <taxon>Scarabaeidae</taxon>
        <taxon>Rutelinae</taxon>
        <taxon>Popillia</taxon>
    </lineage>
</organism>
<proteinExistence type="predicted"/>
<name>PO23_POPJA</name>
<evidence type="ECO:0000255" key="1">
    <source>
        <dbReference type="PROSITE-ProRule" id="PRU00405"/>
    </source>
</evidence>
<keyword id="KW-0255">Endonuclease</keyword>
<keyword id="KW-0378">Hydrolase</keyword>
<keyword id="KW-0540">Nuclease</keyword>
<keyword id="KW-0548">Nucleotidyltransferase</keyword>
<keyword id="KW-0695">RNA-directed DNA polymerase</keyword>
<keyword id="KW-0808">Transferase</keyword>
<keyword id="KW-0814">Transposable element</keyword>
<dbReference type="EC" id="2.7.7.49"/>
<dbReference type="EMBL" id="L00948">
    <property type="protein sequence ID" value="AAA29786.1"/>
    <property type="molecule type" value="Genomic_DNA"/>
</dbReference>
<dbReference type="PIR" id="A47757">
    <property type="entry name" value="A47757"/>
</dbReference>
<dbReference type="SMR" id="Q05118"/>
<dbReference type="GO" id="GO:0004519">
    <property type="term" value="F:endonuclease activity"/>
    <property type="evidence" value="ECO:0007669"/>
    <property type="project" value="UniProtKB-KW"/>
</dbReference>
<dbReference type="GO" id="GO:0003964">
    <property type="term" value="F:RNA-directed DNA polymerase activity"/>
    <property type="evidence" value="ECO:0007669"/>
    <property type="project" value="UniProtKB-KW"/>
</dbReference>
<dbReference type="InterPro" id="IPR043502">
    <property type="entry name" value="DNA/RNA_pol_sf"/>
</dbReference>
<dbReference type="InterPro" id="IPR000477">
    <property type="entry name" value="RT_dom"/>
</dbReference>
<dbReference type="PANTHER" id="PTHR47027">
    <property type="entry name" value="REVERSE TRANSCRIPTASE DOMAIN-CONTAINING PROTEIN"/>
    <property type="match status" value="1"/>
</dbReference>
<dbReference type="PANTHER" id="PTHR47027:SF20">
    <property type="entry name" value="REVERSE TRANSCRIPTASE-LIKE PROTEIN WITH RNA-DIRECTED DNA POLYMERASE DOMAIN"/>
    <property type="match status" value="1"/>
</dbReference>
<dbReference type="Pfam" id="PF00078">
    <property type="entry name" value="RVT_1"/>
    <property type="match status" value="1"/>
</dbReference>
<dbReference type="SUPFAM" id="SSF56672">
    <property type="entry name" value="DNA/RNA polymerases"/>
    <property type="match status" value="1"/>
</dbReference>
<dbReference type="PROSITE" id="PS50878">
    <property type="entry name" value="RT_POL"/>
    <property type="match status" value="1"/>
</dbReference>
<comment type="catalytic activity">
    <reaction evidence="1">
        <text>DNA(n) + a 2'-deoxyribonucleoside 5'-triphosphate = DNA(n+1) + diphosphate</text>
        <dbReference type="Rhea" id="RHEA:22508"/>
        <dbReference type="Rhea" id="RHEA-COMP:17339"/>
        <dbReference type="Rhea" id="RHEA-COMP:17340"/>
        <dbReference type="ChEBI" id="CHEBI:33019"/>
        <dbReference type="ChEBI" id="CHEBI:61560"/>
        <dbReference type="ChEBI" id="CHEBI:173112"/>
        <dbReference type="EC" id="2.7.7.49"/>
    </reaction>
</comment>